<protein>
    <recommendedName>
        <fullName>NADH-ubiquinone oxidoreductase chain 4</fullName>
        <ecNumber evidence="1">7.1.1.2</ecNumber>
    </recommendedName>
    <alternativeName>
        <fullName>NADH dehydrogenase subunit 4</fullName>
    </alternativeName>
</protein>
<reference key="1">
    <citation type="journal article" date="2003" name="Proc. Natl. Acad. Sci. U.S.A.">
        <title>A molecular approach to comparative phylogeography of extant Malagasy lemurs.</title>
        <authorList>
            <person name="Pastorini J."/>
            <person name="Thalmann U."/>
            <person name="Martin R.D."/>
        </authorList>
    </citation>
    <scope>NUCLEOTIDE SEQUENCE [GENOMIC DNA]</scope>
    <source>
        <strain>Isolate JP27</strain>
        <strain>Isolate JP52</strain>
    </source>
</reference>
<reference key="2">
    <citation type="journal article" date="2002" name="Proc. Natl. Acad. Sci. U.S.A.">
        <title>Mammalian mitogenomic relationships and the root of the eutherian tree.</title>
        <authorList>
            <person name="Arnason U."/>
            <person name="Adegoke J.A."/>
            <person name="Bodin K."/>
            <person name="Born E.W."/>
            <person name="Esa Y.B."/>
            <person name="Gullberg A."/>
            <person name="Nilsson M."/>
            <person name="Short R.V."/>
            <person name="Xu X."/>
            <person name="Janke A."/>
        </authorList>
    </citation>
    <scope>NUCLEOTIDE SEQUENCE [GENOMIC DNA]</scope>
</reference>
<reference key="3">
    <citation type="journal article" date="1988" name="Mol. Biol. Evol.">
        <title>Molecular phylogeny and evolution of primate mitochondrial DNA.</title>
        <authorList>
            <person name="Hayasaka K."/>
            <person name="Gojobori T."/>
            <person name="Horai S."/>
        </authorList>
    </citation>
    <scope>NUCLEOTIDE SEQUENCE [GENOMIC DNA] OF 308-459</scope>
</reference>
<evidence type="ECO:0000250" key="1">
    <source>
        <dbReference type="UniProtKB" id="P03905"/>
    </source>
</evidence>
<evidence type="ECO:0000250" key="2">
    <source>
        <dbReference type="UniProtKB" id="P03910"/>
    </source>
</evidence>
<evidence type="ECO:0000255" key="3"/>
<evidence type="ECO:0000305" key="4"/>
<gene>
    <name type="primary">MT-ND4</name>
    <name type="synonym">MTND4</name>
    <name type="synonym">NADH4</name>
    <name type="synonym">ND4</name>
</gene>
<keyword id="KW-0249">Electron transport</keyword>
<keyword id="KW-0472">Membrane</keyword>
<keyword id="KW-0496">Mitochondrion</keyword>
<keyword id="KW-0999">Mitochondrion inner membrane</keyword>
<keyword id="KW-0520">NAD</keyword>
<keyword id="KW-0679">Respiratory chain</keyword>
<keyword id="KW-1278">Translocase</keyword>
<keyword id="KW-0812">Transmembrane</keyword>
<keyword id="KW-1133">Transmembrane helix</keyword>
<keyword id="KW-0813">Transport</keyword>
<keyword id="KW-0830">Ubiquinone</keyword>
<name>NU4M_LEMCA</name>
<organism>
    <name type="scientific">Lemur catta</name>
    <name type="common">Ring-tailed lemur</name>
    <dbReference type="NCBI Taxonomy" id="9447"/>
    <lineage>
        <taxon>Eukaryota</taxon>
        <taxon>Metazoa</taxon>
        <taxon>Chordata</taxon>
        <taxon>Craniata</taxon>
        <taxon>Vertebrata</taxon>
        <taxon>Euteleostomi</taxon>
        <taxon>Mammalia</taxon>
        <taxon>Eutheria</taxon>
        <taxon>Euarchontoglires</taxon>
        <taxon>Primates</taxon>
        <taxon>Strepsirrhini</taxon>
        <taxon>Lemuriformes</taxon>
        <taxon>Lemuridae</taxon>
        <taxon>Lemur</taxon>
    </lineage>
</organism>
<geneLocation type="mitochondrion"/>
<comment type="function">
    <text evidence="1">Core subunit of the mitochondrial membrane respiratory chain NADH dehydrogenase (Complex I) which catalyzes electron transfer from NADH through the respiratory chain, using ubiquinone as an electron acceptor. Essential for the catalytic activity and assembly of complex I.</text>
</comment>
<comment type="catalytic activity">
    <reaction evidence="1">
        <text>a ubiquinone + NADH + 5 H(+)(in) = a ubiquinol + NAD(+) + 4 H(+)(out)</text>
        <dbReference type="Rhea" id="RHEA:29091"/>
        <dbReference type="Rhea" id="RHEA-COMP:9565"/>
        <dbReference type="Rhea" id="RHEA-COMP:9566"/>
        <dbReference type="ChEBI" id="CHEBI:15378"/>
        <dbReference type="ChEBI" id="CHEBI:16389"/>
        <dbReference type="ChEBI" id="CHEBI:17976"/>
        <dbReference type="ChEBI" id="CHEBI:57540"/>
        <dbReference type="ChEBI" id="CHEBI:57945"/>
        <dbReference type="EC" id="7.1.1.2"/>
    </reaction>
</comment>
<comment type="subunit">
    <text evidence="2">Core subunit of respiratory chain NADH dehydrogenase (Complex I) which is composed of 45 different subunits.</text>
</comment>
<comment type="subcellular location">
    <subcellularLocation>
        <location evidence="2">Mitochondrion inner membrane</location>
        <topology evidence="3">Multi-pass membrane protein</topology>
    </subcellularLocation>
</comment>
<comment type="similarity">
    <text evidence="4">Belongs to the complex I subunit 4 family.</text>
</comment>
<accession>Q34878</accession>
<accession>Q8HCB2</accession>
<accession>Q8LX25</accession>
<proteinExistence type="inferred from homology"/>
<dbReference type="EC" id="7.1.1.2" evidence="1"/>
<dbReference type="EMBL" id="AF224569">
    <property type="protein sequence ID" value="AAN64756.1"/>
    <property type="molecule type" value="Genomic_DNA"/>
</dbReference>
<dbReference type="EMBL" id="AF224570">
    <property type="protein sequence ID" value="AAN64760.1"/>
    <property type="molecule type" value="Genomic_DNA"/>
</dbReference>
<dbReference type="EMBL" id="AJ421451">
    <property type="protein sequence ID" value="CAD13430.2"/>
    <property type="status" value="ALT_SEQ"/>
    <property type="molecule type" value="Genomic_DNA"/>
</dbReference>
<dbReference type="EMBL" id="M22657">
    <property type="protein sequence ID" value="AAA69751.1"/>
    <property type="molecule type" value="Genomic_DNA"/>
</dbReference>
<dbReference type="PIR" id="I57440">
    <property type="entry name" value="I57440"/>
</dbReference>
<dbReference type="RefSeq" id="NP_659297.3">
    <property type="nucleotide sequence ID" value="NC_004025.1"/>
</dbReference>
<dbReference type="SMR" id="Q34878"/>
<dbReference type="OrthoDB" id="564260at2759"/>
<dbReference type="GO" id="GO:0005743">
    <property type="term" value="C:mitochondrial inner membrane"/>
    <property type="evidence" value="ECO:0000250"/>
    <property type="project" value="UniProtKB"/>
</dbReference>
<dbReference type="GO" id="GO:0008137">
    <property type="term" value="F:NADH dehydrogenase (ubiquinone) activity"/>
    <property type="evidence" value="ECO:0000250"/>
    <property type="project" value="UniProtKB"/>
</dbReference>
<dbReference type="GO" id="GO:0048039">
    <property type="term" value="F:ubiquinone binding"/>
    <property type="evidence" value="ECO:0007669"/>
    <property type="project" value="TreeGrafter"/>
</dbReference>
<dbReference type="GO" id="GO:0015990">
    <property type="term" value="P:electron transport coupled proton transport"/>
    <property type="evidence" value="ECO:0007669"/>
    <property type="project" value="TreeGrafter"/>
</dbReference>
<dbReference type="GO" id="GO:0006120">
    <property type="term" value="P:mitochondrial electron transport, NADH to ubiquinone"/>
    <property type="evidence" value="ECO:0000250"/>
    <property type="project" value="UniProtKB"/>
</dbReference>
<dbReference type="GO" id="GO:0032981">
    <property type="term" value="P:mitochondrial respiratory chain complex I assembly"/>
    <property type="evidence" value="ECO:0000250"/>
    <property type="project" value="UniProtKB"/>
</dbReference>
<dbReference type="InterPro" id="IPR000260">
    <property type="entry name" value="NADH4_N"/>
</dbReference>
<dbReference type="InterPro" id="IPR010227">
    <property type="entry name" value="NADH_Q_OxRdtase_chainM/4"/>
</dbReference>
<dbReference type="InterPro" id="IPR003918">
    <property type="entry name" value="NADH_UbQ_OxRdtase"/>
</dbReference>
<dbReference type="InterPro" id="IPR001750">
    <property type="entry name" value="ND/Mrp_TM"/>
</dbReference>
<dbReference type="NCBIfam" id="TIGR01972">
    <property type="entry name" value="NDH_I_M"/>
    <property type="match status" value="1"/>
</dbReference>
<dbReference type="PANTHER" id="PTHR43507">
    <property type="entry name" value="NADH-UBIQUINONE OXIDOREDUCTASE CHAIN 4"/>
    <property type="match status" value="1"/>
</dbReference>
<dbReference type="PANTHER" id="PTHR43507:SF20">
    <property type="entry name" value="NADH-UBIQUINONE OXIDOREDUCTASE CHAIN 4"/>
    <property type="match status" value="1"/>
</dbReference>
<dbReference type="Pfam" id="PF01059">
    <property type="entry name" value="Oxidored_q5_N"/>
    <property type="match status" value="1"/>
</dbReference>
<dbReference type="Pfam" id="PF00361">
    <property type="entry name" value="Proton_antipo_M"/>
    <property type="match status" value="1"/>
</dbReference>
<dbReference type="PRINTS" id="PR01437">
    <property type="entry name" value="NUOXDRDTASE4"/>
</dbReference>
<feature type="chain" id="PRO_0000117947" description="NADH-ubiquinone oxidoreductase chain 4">
    <location>
        <begin position="1"/>
        <end position="459"/>
    </location>
</feature>
<feature type="transmembrane region" description="Helical" evidence="3">
    <location>
        <begin position="22"/>
        <end position="42"/>
    </location>
</feature>
<feature type="transmembrane region" description="Helical" evidence="3">
    <location>
        <begin position="60"/>
        <end position="80"/>
    </location>
</feature>
<feature type="transmembrane region" description="Helical" evidence="3">
    <location>
        <begin position="90"/>
        <end position="110"/>
    </location>
</feature>
<feature type="transmembrane region" description="Helical" evidence="3">
    <location>
        <begin position="113"/>
        <end position="133"/>
    </location>
</feature>
<feature type="transmembrane region" description="Helical" evidence="3">
    <location>
        <begin position="145"/>
        <end position="165"/>
    </location>
</feature>
<feature type="transmembrane region" description="Helical" evidence="3">
    <location>
        <begin position="194"/>
        <end position="214"/>
    </location>
</feature>
<feature type="transmembrane region" description="Helical" evidence="3">
    <location>
        <begin position="224"/>
        <end position="244"/>
    </location>
</feature>
<feature type="transmembrane region" description="Helical" evidence="3">
    <location>
        <begin position="257"/>
        <end position="277"/>
    </location>
</feature>
<feature type="transmembrane region" description="Helical" evidence="3">
    <location>
        <begin position="284"/>
        <end position="303"/>
    </location>
</feature>
<feature type="transmembrane region" description="Helical" evidence="3">
    <location>
        <begin position="308"/>
        <end position="330"/>
    </location>
</feature>
<feature type="transmembrane region" description="Helical" evidence="3">
    <location>
        <begin position="351"/>
        <end position="371"/>
    </location>
</feature>
<feature type="transmembrane region" description="Helical" evidence="3">
    <location>
        <begin position="391"/>
        <end position="411"/>
    </location>
</feature>
<feature type="sequence conflict" description="In Ref. 2; CAD13430." evidence="4" ref="2">
    <original>AA</original>
    <variation>PP</variation>
    <location>
        <begin position="232"/>
        <end position="233"/>
    </location>
</feature>
<sequence>MLKIIIPTIMLFPVTWCSSSPMIWINTTLHSLLISLAGLLFLNQFNDSNNNFSLTFFSDSLSSPLVVLTMWLLPLMIMASQHHLKKEPWTLKKLYISMLIFLQMFLIMTFTATELILFYILFEATLIPTLIIITRWGNQTERLNAGLYFLFYTLIGSLPLLVALIHIQNYLGSLNMLTMSFCFQELSNSWSSNLLWMACIMAFMVKMPLYGLHLWLPKAHVEAPIAGSMVLAAVLLKLGGYGMMRITMILNPMTKYMAYPFLMLCLWGMIMTSSICLRQTDLKSLIAYSSVSHMALVIVAILIQTPWSFMGATILMIAHGLTSSMLFCLANSNYERIHSRTMLLARGIQTILPLMATWWLLASLTNLALPPSINLIGELFVTMASFSWSNITIILMGLNMLITALYSLYMLTTTQRGKLTYHSHNLNPSFTRENTLMSMHMLPLLLFTLNPKIILGPTY</sequence>